<name>HUTI_PARP8</name>
<evidence type="ECO:0000255" key="1">
    <source>
        <dbReference type="HAMAP-Rule" id="MF_00372"/>
    </source>
</evidence>
<comment type="function">
    <text evidence="1">Catalyzes the hydrolytic cleavage of the carbon-nitrogen bond in imidazolone-5-propanoate to yield N-formimidoyl-L-glutamate. It is the third step in the universal histidine degradation pathway.</text>
</comment>
<comment type="catalytic activity">
    <reaction evidence="1">
        <text>4-imidazolone-5-propanoate + H2O = N-formimidoyl-L-glutamate</text>
        <dbReference type="Rhea" id="RHEA:23660"/>
        <dbReference type="ChEBI" id="CHEBI:15377"/>
        <dbReference type="ChEBI" id="CHEBI:58928"/>
        <dbReference type="ChEBI" id="CHEBI:77893"/>
        <dbReference type="EC" id="3.5.2.7"/>
    </reaction>
</comment>
<comment type="cofactor">
    <cofactor evidence="1">
        <name>Zn(2+)</name>
        <dbReference type="ChEBI" id="CHEBI:29105"/>
    </cofactor>
    <cofactor evidence="1">
        <name>Fe(3+)</name>
        <dbReference type="ChEBI" id="CHEBI:29034"/>
    </cofactor>
    <text evidence="1">Binds 1 zinc or iron ion per subunit.</text>
</comment>
<comment type="pathway">
    <text evidence="1">Amino-acid degradation; L-histidine degradation into L-glutamate; N-formimidoyl-L-glutamate from L-histidine: step 3/3.</text>
</comment>
<comment type="subcellular location">
    <subcellularLocation>
        <location evidence="1">Cytoplasm</location>
    </subcellularLocation>
</comment>
<comment type="similarity">
    <text evidence="1">Belongs to the metallo-dependent hydrolases superfamily. HutI family.</text>
</comment>
<protein>
    <recommendedName>
        <fullName evidence="1">Imidazolonepropionase</fullName>
        <ecNumber evidence="1">3.5.2.7</ecNumber>
    </recommendedName>
    <alternativeName>
        <fullName evidence="1">Imidazolone-5-propionate hydrolase</fullName>
    </alternativeName>
</protein>
<dbReference type="EC" id="3.5.2.7" evidence="1"/>
<dbReference type="EMBL" id="CP001043">
    <property type="protein sequence ID" value="ACC70992.1"/>
    <property type="molecule type" value="Genomic_DNA"/>
</dbReference>
<dbReference type="RefSeq" id="WP_012401202.1">
    <property type="nucleotide sequence ID" value="NC_010622.1"/>
</dbReference>
<dbReference type="SMR" id="B2JCJ1"/>
<dbReference type="STRING" id="391038.Bphy_1810"/>
<dbReference type="KEGG" id="bph:Bphy_1810"/>
<dbReference type="eggNOG" id="COG1228">
    <property type="taxonomic scope" value="Bacteria"/>
</dbReference>
<dbReference type="HOGENOM" id="CLU_041647_0_0_4"/>
<dbReference type="OrthoDB" id="9776455at2"/>
<dbReference type="UniPathway" id="UPA00379">
    <property type="reaction ID" value="UER00551"/>
</dbReference>
<dbReference type="Proteomes" id="UP000001192">
    <property type="component" value="Chromosome 1"/>
</dbReference>
<dbReference type="GO" id="GO:0005737">
    <property type="term" value="C:cytoplasm"/>
    <property type="evidence" value="ECO:0007669"/>
    <property type="project" value="UniProtKB-SubCell"/>
</dbReference>
<dbReference type="GO" id="GO:0050480">
    <property type="term" value="F:imidazolonepropionase activity"/>
    <property type="evidence" value="ECO:0007669"/>
    <property type="project" value="UniProtKB-UniRule"/>
</dbReference>
<dbReference type="GO" id="GO:0005506">
    <property type="term" value="F:iron ion binding"/>
    <property type="evidence" value="ECO:0007669"/>
    <property type="project" value="UniProtKB-UniRule"/>
</dbReference>
<dbReference type="GO" id="GO:0008270">
    <property type="term" value="F:zinc ion binding"/>
    <property type="evidence" value="ECO:0007669"/>
    <property type="project" value="UniProtKB-UniRule"/>
</dbReference>
<dbReference type="GO" id="GO:0019556">
    <property type="term" value="P:L-histidine catabolic process to glutamate and formamide"/>
    <property type="evidence" value="ECO:0007669"/>
    <property type="project" value="UniProtKB-UniPathway"/>
</dbReference>
<dbReference type="GO" id="GO:0019557">
    <property type="term" value="P:L-histidine catabolic process to glutamate and formate"/>
    <property type="evidence" value="ECO:0007669"/>
    <property type="project" value="UniProtKB-UniPathway"/>
</dbReference>
<dbReference type="CDD" id="cd01296">
    <property type="entry name" value="Imidazolone-5PH"/>
    <property type="match status" value="1"/>
</dbReference>
<dbReference type="FunFam" id="3.20.20.140:FF:000007">
    <property type="entry name" value="Imidazolonepropionase"/>
    <property type="match status" value="1"/>
</dbReference>
<dbReference type="Gene3D" id="3.20.20.140">
    <property type="entry name" value="Metal-dependent hydrolases"/>
    <property type="match status" value="1"/>
</dbReference>
<dbReference type="Gene3D" id="2.30.40.10">
    <property type="entry name" value="Urease, subunit C, domain 1"/>
    <property type="match status" value="1"/>
</dbReference>
<dbReference type="HAMAP" id="MF_00372">
    <property type="entry name" value="HutI"/>
    <property type="match status" value="1"/>
</dbReference>
<dbReference type="InterPro" id="IPR006680">
    <property type="entry name" value="Amidohydro-rel"/>
</dbReference>
<dbReference type="InterPro" id="IPR005920">
    <property type="entry name" value="HutI"/>
</dbReference>
<dbReference type="InterPro" id="IPR011059">
    <property type="entry name" value="Metal-dep_hydrolase_composite"/>
</dbReference>
<dbReference type="InterPro" id="IPR032466">
    <property type="entry name" value="Metal_Hydrolase"/>
</dbReference>
<dbReference type="NCBIfam" id="TIGR01224">
    <property type="entry name" value="hutI"/>
    <property type="match status" value="1"/>
</dbReference>
<dbReference type="PANTHER" id="PTHR42752">
    <property type="entry name" value="IMIDAZOLONEPROPIONASE"/>
    <property type="match status" value="1"/>
</dbReference>
<dbReference type="PANTHER" id="PTHR42752:SF1">
    <property type="entry name" value="IMIDAZOLONEPROPIONASE-RELATED"/>
    <property type="match status" value="1"/>
</dbReference>
<dbReference type="Pfam" id="PF01979">
    <property type="entry name" value="Amidohydro_1"/>
    <property type="match status" value="1"/>
</dbReference>
<dbReference type="SUPFAM" id="SSF51338">
    <property type="entry name" value="Composite domain of metallo-dependent hydrolases"/>
    <property type="match status" value="1"/>
</dbReference>
<dbReference type="SUPFAM" id="SSF51556">
    <property type="entry name" value="Metallo-dependent hydrolases"/>
    <property type="match status" value="1"/>
</dbReference>
<sequence>MKQTVWNHLKLCPQGDPAQTIDDAAIAVENGRIVWLGAVRELPAQYAAWPREDLGGAWVTPGLVDCHTHLVYGGQRADEFAQRLAGVSYEEIAKQGGGIVSTVRATRAADEASLFAQSAARLEAMLAEGVTAIEIKSGYGLDLQSERKMLRVARQLGERYPVKVYTTFLGAHALPPEFASRADDYIDEVCEGMLPALADEGLVDAVDVFCERIGFSLEQSERVFNAAARHGLPVKMHAEQLSNAGGTALAARYGALSADHLEFLDEAGVAAMKEAGTVAVLLPGAYYFIRETQLPPVELLRRYGVPIAISTDSNPGTSPATSLPLMMNMATTLFRMTVPEVLRGVTCHAAQALGKADTHGTLAVGRAADFAVWSVQSLAELAYWIGRPLCERVVRGGETVHLRHAR</sequence>
<organism>
    <name type="scientific">Paraburkholderia phymatum (strain DSM 17167 / CIP 108236 / LMG 21445 / STM815)</name>
    <name type="common">Burkholderia phymatum</name>
    <dbReference type="NCBI Taxonomy" id="391038"/>
    <lineage>
        <taxon>Bacteria</taxon>
        <taxon>Pseudomonadati</taxon>
        <taxon>Pseudomonadota</taxon>
        <taxon>Betaproteobacteria</taxon>
        <taxon>Burkholderiales</taxon>
        <taxon>Burkholderiaceae</taxon>
        <taxon>Paraburkholderia</taxon>
    </lineage>
</organism>
<keyword id="KW-0963">Cytoplasm</keyword>
<keyword id="KW-0369">Histidine metabolism</keyword>
<keyword id="KW-0378">Hydrolase</keyword>
<keyword id="KW-0408">Iron</keyword>
<keyword id="KW-0479">Metal-binding</keyword>
<keyword id="KW-1185">Reference proteome</keyword>
<keyword id="KW-0862">Zinc</keyword>
<feature type="chain" id="PRO_1000121539" description="Imidazolonepropionase">
    <location>
        <begin position="1"/>
        <end position="406"/>
    </location>
</feature>
<feature type="binding site" evidence="1">
    <location>
        <position position="67"/>
    </location>
    <ligand>
        <name>Fe(3+)</name>
        <dbReference type="ChEBI" id="CHEBI:29034"/>
    </ligand>
</feature>
<feature type="binding site" evidence="1">
    <location>
        <position position="67"/>
    </location>
    <ligand>
        <name>Zn(2+)</name>
        <dbReference type="ChEBI" id="CHEBI:29105"/>
    </ligand>
</feature>
<feature type="binding site" evidence="1">
    <location>
        <position position="69"/>
    </location>
    <ligand>
        <name>Fe(3+)</name>
        <dbReference type="ChEBI" id="CHEBI:29034"/>
    </ligand>
</feature>
<feature type="binding site" evidence="1">
    <location>
        <position position="69"/>
    </location>
    <ligand>
        <name>Zn(2+)</name>
        <dbReference type="ChEBI" id="CHEBI:29105"/>
    </ligand>
</feature>
<feature type="binding site" evidence="1">
    <location>
        <position position="76"/>
    </location>
    <ligand>
        <name>4-imidazolone-5-propanoate</name>
        <dbReference type="ChEBI" id="CHEBI:77893"/>
    </ligand>
</feature>
<feature type="binding site" evidence="1">
    <location>
        <position position="139"/>
    </location>
    <ligand>
        <name>4-imidazolone-5-propanoate</name>
        <dbReference type="ChEBI" id="CHEBI:77893"/>
    </ligand>
</feature>
<feature type="binding site" evidence="1">
    <location>
        <position position="139"/>
    </location>
    <ligand>
        <name>N-formimidoyl-L-glutamate</name>
        <dbReference type="ChEBI" id="CHEBI:58928"/>
    </ligand>
</feature>
<feature type="binding site" evidence="1">
    <location>
        <position position="172"/>
    </location>
    <ligand>
        <name>4-imidazolone-5-propanoate</name>
        <dbReference type="ChEBI" id="CHEBI:77893"/>
    </ligand>
</feature>
<feature type="binding site" evidence="1">
    <location>
        <position position="237"/>
    </location>
    <ligand>
        <name>Fe(3+)</name>
        <dbReference type="ChEBI" id="CHEBI:29034"/>
    </ligand>
</feature>
<feature type="binding site" evidence="1">
    <location>
        <position position="237"/>
    </location>
    <ligand>
        <name>Zn(2+)</name>
        <dbReference type="ChEBI" id="CHEBI:29105"/>
    </ligand>
</feature>
<feature type="binding site" evidence="1">
    <location>
        <position position="240"/>
    </location>
    <ligand>
        <name>4-imidazolone-5-propanoate</name>
        <dbReference type="ChEBI" id="CHEBI:77893"/>
    </ligand>
</feature>
<feature type="binding site" evidence="1">
    <location>
        <position position="312"/>
    </location>
    <ligand>
        <name>Fe(3+)</name>
        <dbReference type="ChEBI" id="CHEBI:29034"/>
    </ligand>
</feature>
<feature type="binding site" evidence="1">
    <location>
        <position position="312"/>
    </location>
    <ligand>
        <name>Zn(2+)</name>
        <dbReference type="ChEBI" id="CHEBI:29105"/>
    </ligand>
</feature>
<feature type="binding site" evidence="1">
    <location>
        <position position="314"/>
    </location>
    <ligand>
        <name>N-formimidoyl-L-glutamate</name>
        <dbReference type="ChEBI" id="CHEBI:58928"/>
    </ligand>
</feature>
<feature type="binding site" evidence="1">
    <location>
        <position position="316"/>
    </location>
    <ligand>
        <name>N-formimidoyl-L-glutamate</name>
        <dbReference type="ChEBI" id="CHEBI:58928"/>
    </ligand>
</feature>
<feature type="binding site" evidence="1">
    <location>
        <position position="317"/>
    </location>
    <ligand>
        <name>4-imidazolone-5-propanoate</name>
        <dbReference type="ChEBI" id="CHEBI:77893"/>
    </ligand>
</feature>
<accession>B2JCJ1</accession>
<reference key="1">
    <citation type="journal article" date="2014" name="Stand. Genomic Sci.">
        <title>Complete genome sequence of Burkholderia phymatum STM815(T), a broad host range and efficient nitrogen-fixing symbiont of Mimosa species.</title>
        <authorList>
            <person name="Moulin L."/>
            <person name="Klonowska A."/>
            <person name="Caroline B."/>
            <person name="Booth K."/>
            <person name="Vriezen J.A."/>
            <person name="Melkonian R."/>
            <person name="James E.K."/>
            <person name="Young J.P."/>
            <person name="Bena G."/>
            <person name="Hauser L."/>
            <person name="Land M."/>
            <person name="Kyrpides N."/>
            <person name="Bruce D."/>
            <person name="Chain P."/>
            <person name="Copeland A."/>
            <person name="Pitluck S."/>
            <person name="Woyke T."/>
            <person name="Lizotte-Waniewski M."/>
            <person name="Bristow J."/>
            <person name="Riley M."/>
        </authorList>
    </citation>
    <scope>NUCLEOTIDE SEQUENCE [LARGE SCALE GENOMIC DNA]</scope>
    <source>
        <strain>DSM 17167 / CIP 108236 / LMG 21445 / STM815</strain>
    </source>
</reference>
<proteinExistence type="inferred from homology"/>
<gene>
    <name evidence="1" type="primary">hutI</name>
    <name type="ordered locus">Bphy_1810</name>
</gene>